<gene>
    <name evidence="2" type="primary">hppA</name>
    <name type="ordered locus">CTC_00383</name>
</gene>
<name>HPPA_CLOTE</name>
<reference key="1">
    <citation type="journal article" date="2003" name="Proc. Natl. Acad. Sci. U.S.A.">
        <title>The genome sequence of Clostridium tetani, the causative agent of tetanus disease.</title>
        <authorList>
            <person name="Brueggemann H."/>
            <person name="Baeumer S."/>
            <person name="Fricke W.F."/>
            <person name="Wiezer A."/>
            <person name="Liesegang H."/>
            <person name="Decker I."/>
            <person name="Herzberg C."/>
            <person name="Martinez-Arias R."/>
            <person name="Merkl R."/>
            <person name="Henne A."/>
            <person name="Gottschalk G."/>
        </authorList>
    </citation>
    <scope>NUCLEOTIDE SEQUENCE [LARGE SCALE GENOMIC DNA]</scope>
    <source>
        <strain>Massachusetts / E88</strain>
    </source>
</reference>
<protein>
    <recommendedName>
        <fullName evidence="2">Putative K(+)-stimulated pyrophosphate-energized sodium pump</fullName>
        <ecNumber evidence="2">7.2.3.1</ecNumber>
    </recommendedName>
    <alternativeName>
        <fullName evidence="2">Membrane-bound sodium-translocating pyrophosphatase</fullName>
    </alternativeName>
    <alternativeName>
        <fullName evidence="2">Pyrophosphate-energized inorganic pyrophosphatase</fullName>
        <shortName evidence="2">Na(+)-PPase</shortName>
    </alternativeName>
</protein>
<organism>
    <name type="scientific">Clostridium tetani (strain Massachusetts / E88)</name>
    <dbReference type="NCBI Taxonomy" id="212717"/>
    <lineage>
        <taxon>Bacteria</taxon>
        <taxon>Bacillati</taxon>
        <taxon>Bacillota</taxon>
        <taxon>Clostridia</taxon>
        <taxon>Eubacteriales</taxon>
        <taxon>Clostridiaceae</taxon>
        <taxon>Clostridium</taxon>
    </lineage>
</organism>
<feature type="chain" id="PRO_0000217002" description="Putative K(+)-stimulated pyrophosphate-energized sodium pump">
    <location>
        <begin position="1"/>
        <end position="673"/>
    </location>
</feature>
<feature type="transmembrane region" description="Helical" evidence="2">
    <location>
        <begin position="3"/>
        <end position="23"/>
    </location>
</feature>
<feature type="transmembrane region" description="Helical" evidence="2">
    <location>
        <begin position="62"/>
        <end position="82"/>
    </location>
</feature>
<feature type="transmembrane region" description="Helical" evidence="2">
    <location>
        <begin position="84"/>
        <end position="104"/>
    </location>
</feature>
<feature type="transmembrane region" description="Helical" evidence="2">
    <location>
        <begin position="127"/>
        <end position="147"/>
    </location>
</feature>
<feature type="transmembrane region" description="Helical" evidence="2">
    <location>
        <begin position="154"/>
        <end position="174"/>
    </location>
</feature>
<feature type="transmembrane region" description="Helical" evidence="2">
    <location>
        <begin position="222"/>
        <end position="242"/>
    </location>
</feature>
<feature type="transmembrane region" description="Helical" evidence="2">
    <location>
        <begin position="247"/>
        <end position="267"/>
    </location>
</feature>
<feature type="transmembrane region" description="Helical" evidence="2">
    <location>
        <begin position="279"/>
        <end position="299"/>
    </location>
</feature>
<feature type="transmembrane region" description="Helical" evidence="2">
    <location>
        <begin position="302"/>
        <end position="322"/>
    </location>
</feature>
<feature type="transmembrane region" description="Helical" evidence="2">
    <location>
        <begin position="364"/>
        <end position="384"/>
    </location>
</feature>
<feature type="transmembrane region" description="Helical" evidence="2">
    <location>
        <begin position="387"/>
        <end position="407"/>
    </location>
</feature>
<feature type="transmembrane region" description="Helical" evidence="2">
    <location>
        <begin position="449"/>
        <end position="469"/>
    </location>
</feature>
<feature type="transmembrane region" description="Helical" evidence="2">
    <location>
        <begin position="486"/>
        <end position="506"/>
    </location>
</feature>
<feature type="transmembrane region" description="Helical" evidence="2">
    <location>
        <begin position="553"/>
        <end position="573"/>
    </location>
</feature>
<feature type="transmembrane region" description="Helical" evidence="2">
    <location>
        <begin position="576"/>
        <end position="596"/>
    </location>
</feature>
<feature type="transmembrane region" description="Helical" evidence="2">
    <location>
        <begin position="652"/>
        <end position="672"/>
    </location>
</feature>
<feature type="binding site" evidence="1">
    <location>
        <position position="177"/>
    </location>
    <ligand>
        <name>substrate</name>
    </ligand>
</feature>
<feature type="binding site" evidence="1">
    <location>
        <position position="180"/>
    </location>
    <ligand>
        <name>Mg(2+)</name>
        <dbReference type="ChEBI" id="CHEBI:18420"/>
        <label>1</label>
    </ligand>
</feature>
<feature type="binding site" evidence="1">
    <location>
        <position position="184"/>
    </location>
    <ligand>
        <name>Mg(2+)</name>
        <dbReference type="ChEBI" id="CHEBI:18420"/>
        <label>1</label>
    </ligand>
</feature>
<feature type="binding site" evidence="1">
    <location>
        <position position="207"/>
    </location>
    <ligand>
        <name>Mg(2+)</name>
        <dbReference type="ChEBI" id="CHEBI:18420"/>
        <label>2</label>
    </ligand>
</feature>
<feature type="binding site" evidence="1">
    <location>
        <position position="210"/>
    </location>
    <ligand>
        <name>Mg(2+)</name>
        <dbReference type="ChEBI" id="CHEBI:18420"/>
        <label>2</label>
    </ligand>
</feature>
<feature type="binding site" evidence="1">
    <location>
        <position position="419"/>
    </location>
    <ligand>
        <name>Mg(2+)</name>
        <dbReference type="ChEBI" id="CHEBI:18420"/>
        <label>2</label>
    </ligand>
</feature>
<feature type="binding site" evidence="1">
    <location>
        <position position="603"/>
    </location>
    <ligand>
        <name>Ca(2+)</name>
        <dbReference type="ChEBI" id="CHEBI:29108"/>
    </ligand>
</feature>
<feature type="binding site" evidence="1">
    <location>
        <position position="629"/>
    </location>
    <ligand>
        <name>Ca(2+)</name>
        <dbReference type="ChEBI" id="CHEBI:29108"/>
    </ligand>
</feature>
<feature type="binding site" evidence="1">
    <location>
        <position position="633"/>
    </location>
    <ligand>
        <name>Ca(2+)</name>
        <dbReference type="ChEBI" id="CHEBI:29108"/>
    </ligand>
</feature>
<feature type="binding site" evidence="1">
    <location>
        <position position="636"/>
    </location>
    <ligand>
        <name>substrate</name>
    </ligand>
</feature>
<feature type="site" description="Important for ion transport" evidence="1">
    <location>
        <position position="169"/>
    </location>
</feature>
<feature type="site" description="Important for ion transport" evidence="1">
    <location>
        <position position="214"/>
    </location>
</feature>
<feature type="site" description="Important for ion transport" evidence="1">
    <location>
        <position position="221"/>
    </location>
</feature>
<feature type="site" description="Determinant of potassium dependence" evidence="2">
    <location>
        <position position="449"/>
    </location>
</feature>
<feature type="site" description="Important for ion transport" evidence="1">
    <location>
        <position position="637"/>
    </location>
</feature>
<feature type="site" description="Important for ion transport" evidence="1">
    <location>
        <position position="648"/>
    </location>
</feature>
<evidence type="ECO:0000250" key="1"/>
<evidence type="ECO:0000255" key="2">
    <source>
        <dbReference type="HAMAP-Rule" id="MF_01129"/>
    </source>
</evidence>
<keyword id="KW-0106">Calcium</keyword>
<keyword id="KW-1003">Cell membrane</keyword>
<keyword id="KW-0406">Ion transport</keyword>
<keyword id="KW-0460">Magnesium</keyword>
<keyword id="KW-0472">Membrane</keyword>
<keyword id="KW-0479">Metal-binding</keyword>
<keyword id="KW-0630">Potassium</keyword>
<keyword id="KW-1185">Reference proteome</keyword>
<keyword id="KW-0915">Sodium</keyword>
<keyword id="KW-0739">Sodium transport</keyword>
<keyword id="KW-1278">Translocase</keyword>
<keyword id="KW-0812">Transmembrane</keyword>
<keyword id="KW-1133">Transmembrane helix</keyword>
<keyword id="KW-0813">Transport</keyword>
<sequence length="673" mass="69282">MESFIVYSVLAGVIALIFAFMLSSFISKESAGNERMQEIAGHIHDGAMAFLKTEYKYLTGFIVIVTVILAIFVGWQTAACFILGAIFSIFAGYFGMNVATKANVRTAEAARHSQGKALNIAFSGGAVMGMSVVGLGVVGIGIMYYIFGGNMEFVTGFGLGASSIALFARVGGGIYTKAADVGADLVGKVEAGIPEDDPRNPAVIADNVGDNVGDVAGMGADLFESYVGSIISALTLGTVVYANKEGVMFPLILSSIGIVASIIGILFSRKSKAKDPQKALNTGTYIGGIIVIVSAAILSNTIFGNLKAFFAVASGLVVGMIIGKITEMYTSDAYSSVQKIANQSETGPATTIISGLAVGMYSTLWPIVLISIGVLVSFFVMGGGSNAMVGLYGISLAAVGMLSTTGLTVAVDAYGPIADNAGGIAEMSELPHEVREITDKLDSVGNTTAAIGKGFAIGSAALTALSLFASYAQATELESIDILNTVTLVGLFIGAMLPFLFGALTMESVGKAANEMIEEVRRQFKTIPGIMEGKATPDYKKCVDISTAAAIREMILPGVLAIVVPVAMGLLLGKEALGGLLAGALVSGVLVGILMSNAGGAWDNAKKYIEGGAHGGKGSEAHKAAVVGDTVGDPFKDTSGPSMNILIKLMTIVSLVFAPVVLQYGGILLNLIK</sequence>
<comment type="function">
    <text evidence="2">Sodium pump that utilizes the energy of pyrophosphate hydrolysis as the driving force for Na(+) movement across the membrane.</text>
</comment>
<comment type="catalytic activity">
    <reaction evidence="2">
        <text>Na(+)(in) + diphosphate + H2O = Na(+)(out) + 2 phosphate + H(+)</text>
        <dbReference type="Rhea" id="RHEA:57884"/>
        <dbReference type="ChEBI" id="CHEBI:15377"/>
        <dbReference type="ChEBI" id="CHEBI:15378"/>
        <dbReference type="ChEBI" id="CHEBI:29101"/>
        <dbReference type="ChEBI" id="CHEBI:33019"/>
        <dbReference type="ChEBI" id="CHEBI:43474"/>
        <dbReference type="EC" id="7.2.3.1"/>
    </reaction>
</comment>
<comment type="cofactor">
    <cofactor evidence="2">
        <name>Mg(2+)</name>
        <dbReference type="ChEBI" id="CHEBI:18420"/>
    </cofactor>
</comment>
<comment type="activity regulation">
    <text evidence="2">Requires K(+) for maximal activity.</text>
</comment>
<comment type="subunit">
    <text evidence="2">Homodimer.</text>
</comment>
<comment type="subcellular location">
    <subcellularLocation>
        <location evidence="2">Cell membrane</location>
        <topology evidence="2">Multi-pass membrane protein</topology>
    </subcellularLocation>
</comment>
<comment type="similarity">
    <text evidence="2">Belongs to the H(+)-translocating pyrophosphatase (TC 3.A.10) family. K(+)-stimulated subfamily.</text>
</comment>
<proteinExistence type="inferred from homology"/>
<dbReference type="EC" id="7.2.3.1" evidence="2"/>
<dbReference type="EMBL" id="AE015927">
    <property type="protein sequence ID" value="AAO35020.1"/>
    <property type="molecule type" value="Genomic_DNA"/>
</dbReference>
<dbReference type="RefSeq" id="WP_011098691.1">
    <property type="nucleotide sequence ID" value="NC_004557.1"/>
</dbReference>
<dbReference type="SMR" id="Q898Q9"/>
<dbReference type="STRING" id="212717.CTC_00383"/>
<dbReference type="TCDB" id="3.A.10.1.7">
    <property type="family name" value="the h(+), na(+)-translocating pyrophosphatase (m(+)-ppase) family"/>
</dbReference>
<dbReference type="GeneID" id="24253865"/>
<dbReference type="KEGG" id="ctc:CTC_00383"/>
<dbReference type="HOGENOM" id="CLU_008743_3_1_9"/>
<dbReference type="OrthoDB" id="9808652at2"/>
<dbReference type="Proteomes" id="UP000001412">
    <property type="component" value="Chromosome"/>
</dbReference>
<dbReference type="GO" id="GO:0005886">
    <property type="term" value="C:plasma membrane"/>
    <property type="evidence" value="ECO:0007669"/>
    <property type="project" value="UniProtKB-SubCell"/>
</dbReference>
<dbReference type="GO" id="GO:0009678">
    <property type="term" value="F:diphosphate hydrolysis-driven proton transmembrane transporter activity"/>
    <property type="evidence" value="ECO:0007669"/>
    <property type="project" value="UniProtKB-UniRule"/>
</dbReference>
<dbReference type="GO" id="GO:0004427">
    <property type="term" value="F:inorganic diphosphate phosphatase activity"/>
    <property type="evidence" value="ECO:0007669"/>
    <property type="project" value="UniProtKB-UniRule"/>
</dbReference>
<dbReference type="GO" id="GO:0000287">
    <property type="term" value="F:magnesium ion binding"/>
    <property type="evidence" value="ECO:0007669"/>
    <property type="project" value="UniProtKB-UniRule"/>
</dbReference>
<dbReference type="GO" id="GO:0030955">
    <property type="term" value="F:potassium ion binding"/>
    <property type="evidence" value="ECO:0007669"/>
    <property type="project" value="UniProtKB-UniRule"/>
</dbReference>
<dbReference type="GO" id="GO:0006814">
    <property type="term" value="P:sodium ion transport"/>
    <property type="evidence" value="ECO:0007669"/>
    <property type="project" value="UniProtKB-UniRule"/>
</dbReference>
<dbReference type="HAMAP" id="MF_01129">
    <property type="entry name" value="PPase_energized_pump"/>
    <property type="match status" value="1"/>
</dbReference>
<dbReference type="InterPro" id="IPR004131">
    <property type="entry name" value="PPase-energised_H-pump"/>
</dbReference>
<dbReference type="NCBIfam" id="NF001953">
    <property type="entry name" value="PRK00733.2-1"/>
    <property type="match status" value="1"/>
</dbReference>
<dbReference type="NCBIfam" id="NF001960">
    <property type="entry name" value="PRK00733.3-5"/>
    <property type="match status" value="1"/>
</dbReference>
<dbReference type="NCBIfam" id="TIGR01104">
    <property type="entry name" value="V_PPase"/>
    <property type="match status" value="1"/>
</dbReference>
<dbReference type="PANTHER" id="PTHR31998">
    <property type="entry name" value="K(+)-INSENSITIVE PYROPHOSPHATE-ENERGIZED PROTON PUMP"/>
    <property type="match status" value="1"/>
</dbReference>
<dbReference type="Pfam" id="PF03030">
    <property type="entry name" value="H_PPase"/>
    <property type="match status" value="1"/>
</dbReference>
<dbReference type="PIRSF" id="PIRSF001265">
    <property type="entry name" value="H+-PPase"/>
    <property type="match status" value="1"/>
</dbReference>
<accession>Q898Q9</accession>